<dbReference type="EMBL" id="AE016795">
    <property type="protein sequence ID" value="AAO09254.1"/>
    <property type="molecule type" value="Genomic_DNA"/>
</dbReference>
<dbReference type="RefSeq" id="WP_011078818.1">
    <property type="nucleotide sequence ID" value="NC_004459.3"/>
</dbReference>
<dbReference type="SMR" id="Q8DE55"/>
<dbReference type="GeneID" id="93895051"/>
<dbReference type="KEGG" id="vvu:VV1_0745"/>
<dbReference type="HOGENOM" id="CLU_065464_1_2_6"/>
<dbReference type="Proteomes" id="UP000002275">
    <property type="component" value="Chromosome 1"/>
</dbReference>
<dbReference type="GO" id="GO:0022625">
    <property type="term" value="C:cytosolic large ribosomal subunit"/>
    <property type="evidence" value="ECO:0007669"/>
    <property type="project" value="TreeGrafter"/>
</dbReference>
<dbReference type="GO" id="GO:0019843">
    <property type="term" value="F:rRNA binding"/>
    <property type="evidence" value="ECO:0007669"/>
    <property type="project" value="UniProtKB-UniRule"/>
</dbReference>
<dbReference type="GO" id="GO:0003735">
    <property type="term" value="F:structural constituent of ribosome"/>
    <property type="evidence" value="ECO:0007669"/>
    <property type="project" value="InterPro"/>
</dbReference>
<dbReference type="GO" id="GO:0002181">
    <property type="term" value="P:cytoplasmic translation"/>
    <property type="evidence" value="ECO:0007669"/>
    <property type="project" value="TreeGrafter"/>
</dbReference>
<dbReference type="FunFam" id="3.90.930.12:FF:000001">
    <property type="entry name" value="50S ribosomal protein L6"/>
    <property type="match status" value="1"/>
</dbReference>
<dbReference type="FunFam" id="3.90.930.12:FF:000002">
    <property type="entry name" value="50S ribosomal protein L6"/>
    <property type="match status" value="1"/>
</dbReference>
<dbReference type="Gene3D" id="3.90.930.12">
    <property type="entry name" value="Ribosomal protein L6, alpha-beta domain"/>
    <property type="match status" value="2"/>
</dbReference>
<dbReference type="HAMAP" id="MF_01365_B">
    <property type="entry name" value="Ribosomal_uL6_B"/>
    <property type="match status" value="1"/>
</dbReference>
<dbReference type="InterPro" id="IPR000702">
    <property type="entry name" value="Ribosomal_uL6-like"/>
</dbReference>
<dbReference type="InterPro" id="IPR036789">
    <property type="entry name" value="Ribosomal_uL6-like_a/b-dom_sf"/>
</dbReference>
<dbReference type="InterPro" id="IPR020040">
    <property type="entry name" value="Ribosomal_uL6_a/b-dom"/>
</dbReference>
<dbReference type="InterPro" id="IPR019906">
    <property type="entry name" value="Ribosomal_uL6_bac-type"/>
</dbReference>
<dbReference type="InterPro" id="IPR002358">
    <property type="entry name" value="Ribosomal_uL6_CS"/>
</dbReference>
<dbReference type="NCBIfam" id="TIGR03654">
    <property type="entry name" value="L6_bact"/>
    <property type="match status" value="1"/>
</dbReference>
<dbReference type="PANTHER" id="PTHR11655">
    <property type="entry name" value="60S/50S RIBOSOMAL PROTEIN L6/L9"/>
    <property type="match status" value="1"/>
</dbReference>
<dbReference type="PANTHER" id="PTHR11655:SF14">
    <property type="entry name" value="LARGE RIBOSOMAL SUBUNIT PROTEIN UL6M"/>
    <property type="match status" value="1"/>
</dbReference>
<dbReference type="Pfam" id="PF00347">
    <property type="entry name" value="Ribosomal_L6"/>
    <property type="match status" value="2"/>
</dbReference>
<dbReference type="PIRSF" id="PIRSF002162">
    <property type="entry name" value="Ribosomal_L6"/>
    <property type="match status" value="1"/>
</dbReference>
<dbReference type="PRINTS" id="PR00059">
    <property type="entry name" value="RIBOSOMALL6"/>
</dbReference>
<dbReference type="SUPFAM" id="SSF56053">
    <property type="entry name" value="Ribosomal protein L6"/>
    <property type="match status" value="2"/>
</dbReference>
<dbReference type="PROSITE" id="PS00525">
    <property type="entry name" value="RIBOSOMAL_L6_1"/>
    <property type="match status" value="1"/>
</dbReference>
<sequence length="177" mass="18787">MSRVAKAPVAIPAGVEVKLNGQEITVKGAKGELSRVINNAVVIAQEENKLTFGPREGVANAWAQAGTARALVNNMVVGVTEGFTRKLILKGVGYRAAIKGNAVGLTLGFSHPVEHELPAGIKAECPSQTEIVLTGCDKQLIGQVAADIRAYRAPEPYKGKGIRYADENVRSKEAKKK</sequence>
<comment type="function">
    <text evidence="1">This protein binds to the 23S rRNA, and is important in its secondary structure. It is located near the subunit interface in the base of the L7/L12 stalk, and near the tRNA binding site of the peptidyltransferase center.</text>
</comment>
<comment type="subunit">
    <text evidence="1">Part of the 50S ribosomal subunit.</text>
</comment>
<comment type="similarity">
    <text evidence="1">Belongs to the universal ribosomal protein uL6 family.</text>
</comment>
<evidence type="ECO:0000255" key="1">
    <source>
        <dbReference type="HAMAP-Rule" id="MF_01365"/>
    </source>
</evidence>
<evidence type="ECO:0000305" key="2"/>
<organism>
    <name type="scientific">Vibrio vulnificus (strain CMCP6)</name>
    <dbReference type="NCBI Taxonomy" id="216895"/>
    <lineage>
        <taxon>Bacteria</taxon>
        <taxon>Pseudomonadati</taxon>
        <taxon>Pseudomonadota</taxon>
        <taxon>Gammaproteobacteria</taxon>
        <taxon>Vibrionales</taxon>
        <taxon>Vibrionaceae</taxon>
        <taxon>Vibrio</taxon>
    </lineage>
</organism>
<gene>
    <name evidence="1" type="primary">rplF</name>
    <name type="ordered locus">VV1_0745</name>
</gene>
<proteinExistence type="inferred from homology"/>
<accession>Q8DE55</accession>
<feature type="chain" id="PRO_0000265310" description="Large ribosomal subunit protein uL6">
    <location>
        <begin position="1"/>
        <end position="177"/>
    </location>
</feature>
<name>RL6_VIBVU</name>
<keyword id="KW-0687">Ribonucleoprotein</keyword>
<keyword id="KW-0689">Ribosomal protein</keyword>
<keyword id="KW-0694">RNA-binding</keyword>
<keyword id="KW-0699">rRNA-binding</keyword>
<protein>
    <recommendedName>
        <fullName evidence="1">Large ribosomal subunit protein uL6</fullName>
    </recommendedName>
    <alternativeName>
        <fullName evidence="2">50S ribosomal protein L6</fullName>
    </alternativeName>
</protein>
<reference key="1">
    <citation type="submission" date="2002-12" db="EMBL/GenBank/DDBJ databases">
        <title>Complete genome sequence of Vibrio vulnificus CMCP6.</title>
        <authorList>
            <person name="Rhee J.H."/>
            <person name="Kim S.Y."/>
            <person name="Chung S.S."/>
            <person name="Kim J.J."/>
            <person name="Moon Y.H."/>
            <person name="Jeong H."/>
            <person name="Choy H.E."/>
        </authorList>
    </citation>
    <scope>NUCLEOTIDE SEQUENCE [LARGE SCALE GENOMIC DNA]</scope>
    <source>
        <strain>CMCP6</strain>
    </source>
</reference>